<sequence length="287" mass="31559">MPELPEVETVRQGLAQWVTGRRIAEVEVRHPRAIRRHPAGAAHFADVLVGTTVRDVRRRGKYLWLPLDSGDAVIGHLGMSGQLLLQPGAAPDEAHLRVRFRFADDGPELRFVDQRTFGGLSVSAGGAEMPTEIAHIARDPLDPEFSEAAFVAALRRRRTEVKRALLDQTLLSGVGNIYADEALWRARLHGARPADGLTGPAALRLLGHVRDVLGEAIKEGGTSFDALYVNVNGESGYFDRALNVYGRADQPCRRCGTPVRREAFMNRSSYSCPRCQPRPRRALQASG</sequence>
<gene>
    <name evidence="2" type="primary">mutM</name>
    <name evidence="2" type="synonym">fpg</name>
    <name type="ordered locus">Sare_1178</name>
</gene>
<organism>
    <name type="scientific">Salinispora arenicola (strain CNS-205)</name>
    <dbReference type="NCBI Taxonomy" id="391037"/>
    <lineage>
        <taxon>Bacteria</taxon>
        <taxon>Bacillati</taxon>
        <taxon>Actinomycetota</taxon>
        <taxon>Actinomycetes</taxon>
        <taxon>Micromonosporales</taxon>
        <taxon>Micromonosporaceae</taxon>
        <taxon>Salinispora</taxon>
    </lineage>
</organism>
<dbReference type="EC" id="3.2.2.23" evidence="2"/>
<dbReference type="EC" id="4.2.99.18" evidence="2"/>
<dbReference type="EMBL" id="CP000850">
    <property type="protein sequence ID" value="ABV97086.1"/>
    <property type="molecule type" value="Genomic_DNA"/>
</dbReference>
<dbReference type="SMR" id="A8M661"/>
<dbReference type="STRING" id="391037.Sare_1178"/>
<dbReference type="KEGG" id="saq:Sare_1178"/>
<dbReference type="PATRIC" id="fig|391037.6.peg.1196"/>
<dbReference type="eggNOG" id="COG0266">
    <property type="taxonomic scope" value="Bacteria"/>
</dbReference>
<dbReference type="HOGENOM" id="CLU_038423_1_2_11"/>
<dbReference type="OrthoDB" id="9800855at2"/>
<dbReference type="GO" id="GO:0034039">
    <property type="term" value="F:8-oxo-7,8-dihydroguanine DNA N-glycosylase activity"/>
    <property type="evidence" value="ECO:0007669"/>
    <property type="project" value="TreeGrafter"/>
</dbReference>
<dbReference type="GO" id="GO:0140078">
    <property type="term" value="F:class I DNA-(apurinic or apyrimidinic site) endonuclease activity"/>
    <property type="evidence" value="ECO:0007669"/>
    <property type="project" value="UniProtKB-EC"/>
</dbReference>
<dbReference type="GO" id="GO:0003684">
    <property type="term" value="F:damaged DNA binding"/>
    <property type="evidence" value="ECO:0007669"/>
    <property type="project" value="InterPro"/>
</dbReference>
<dbReference type="GO" id="GO:0008270">
    <property type="term" value="F:zinc ion binding"/>
    <property type="evidence" value="ECO:0007669"/>
    <property type="project" value="UniProtKB-UniRule"/>
</dbReference>
<dbReference type="GO" id="GO:0006284">
    <property type="term" value="P:base-excision repair"/>
    <property type="evidence" value="ECO:0007669"/>
    <property type="project" value="InterPro"/>
</dbReference>
<dbReference type="CDD" id="cd08966">
    <property type="entry name" value="EcFpg-like_N"/>
    <property type="match status" value="1"/>
</dbReference>
<dbReference type="FunFam" id="1.10.8.50:FF:000003">
    <property type="entry name" value="Formamidopyrimidine-DNA glycosylase"/>
    <property type="match status" value="1"/>
</dbReference>
<dbReference type="Gene3D" id="1.10.8.50">
    <property type="match status" value="1"/>
</dbReference>
<dbReference type="Gene3D" id="3.20.190.10">
    <property type="entry name" value="MutM-like, N-terminal"/>
    <property type="match status" value="1"/>
</dbReference>
<dbReference type="HAMAP" id="MF_00103">
    <property type="entry name" value="Fapy_DNA_glycosyl"/>
    <property type="match status" value="1"/>
</dbReference>
<dbReference type="InterPro" id="IPR015886">
    <property type="entry name" value="DNA_glyclase/AP_lyase_DNA-bd"/>
</dbReference>
<dbReference type="InterPro" id="IPR020629">
    <property type="entry name" value="Formamido-pyr_DNA_Glyclase"/>
</dbReference>
<dbReference type="InterPro" id="IPR012319">
    <property type="entry name" value="FPG_cat"/>
</dbReference>
<dbReference type="InterPro" id="IPR035937">
    <property type="entry name" value="MutM-like_N-ter"/>
</dbReference>
<dbReference type="InterPro" id="IPR010979">
    <property type="entry name" value="Ribosomal_uS13-like_H2TH"/>
</dbReference>
<dbReference type="InterPro" id="IPR000214">
    <property type="entry name" value="Znf_DNA_glyclase/AP_lyase"/>
</dbReference>
<dbReference type="InterPro" id="IPR010663">
    <property type="entry name" value="Znf_FPG/IleRS"/>
</dbReference>
<dbReference type="NCBIfam" id="TIGR00577">
    <property type="entry name" value="fpg"/>
    <property type="match status" value="1"/>
</dbReference>
<dbReference type="NCBIfam" id="NF002211">
    <property type="entry name" value="PRK01103.1"/>
    <property type="match status" value="1"/>
</dbReference>
<dbReference type="PANTHER" id="PTHR22993">
    <property type="entry name" value="FORMAMIDOPYRIMIDINE-DNA GLYCOSYLASE"/>
    <property type="match status" value="1"/>
</dbReference>
<dbReference type="PANTHER" id="PTHR22993:SF9">
    <property type="entry name" value="FORMAMIDOPYRIMIDINE-DNA GLYCOSYLASE"/>
    <property type="match status" value="1"/>
</dbReference>
<dbReference type="Pfam" id="PF01149">
    <property type="entry name" value="Fapy_DNA_glyco"/>
    <property type="match status" value="1"/>
</dbReference>
<dbReference type="Pfam" id="PF06831">
    <property type="entry name" value="H2TH"/>
    <property type="match status" value="1"/>
</dbReference>
<dbReference type="Pfam" id="PF06827">
    <property type="entry name" value="zf-FPG_IleRS"/>
    <property type="match status" value="1"/>
</dbReference>
<dbReference type="SMART" id="SM00898">
    <property type="entry name" value="Fapy_DNA_glyco"/>
    <property type="match status" value="1"/>
</dbReference>
<dbReference type="SMART" id="SM01232">
    <property type="entry name" value="H2TH"/>
    <property type="match status" value="1"/>
</dbReference>
<dbReference type="SUPFAM" id="SSF57716">
    <property type="entry name" value="Glucocorticoid receptor-like (DNA-binding domain)"/>
    <property type="match status" value="1"/>
</dbReference>
<dbReference type="SUPFAM" id="SSF81624">
    <property type="entry name" value="N-terminal domain of MutM-like DNA repair proteins"/>
    <property type="match status" value="1"/>
</dbReference>
<dbReference type="SUPFAM" id="SSF46946">
    <property type="entry name" value="S13-like H2TH domain"/>
    <property type="match status" value="1"/>
</dbReference>
<dbReference type="PROSITE" id="PS51068">
    <property type="entry name" value="FPG_CAT"/>
    <property type="match status" value="1"/>
</dbReference>
<dbReference type="PROSITE" id="PS51066">
    <property type="entry name" value="ZF_FPG_2"/>
    <property type="match status" value="1"/>
</dbReference>
<proteinExistence type="inferred from homology"/>
<keyword id="KW-0227">DNA damage</keyword>
<keyword id="KW-0234">DNA repair</keyword>
<keyword id="KW-0238">DNA-binding</keyword>
<keyword id="KW-0326">Glycosidase</keyword>
<keyword id="KW-0378">Hydrolase</keyword>
<keyword id="KW-0456">Lyase</keyword>
<keyword id="KW-0479">Metal-binding</keyword>
<keyword id="KW-0511">Multifunctional enzyme</keyword>
<keyword id="KW-0862">Zinc</keyword>
<keyword id="KW-0863">Zinc-finger</keyword>
<comment type="function">
    <text evidence="2">Involved in base excision repair of DNA damaged by oxidation or by mutagenic agents. Acts as a DNA glycosylase that recognizes and removes damaged bases. Has a preference for oxidized purines, such as 7,8-dihydro-8-oxoguanine (8-oxoG). Has AP (apurinic/apyrimidinic) lyase activity and introduces nicks in the DNA strand. Cleaves the DNA backbone by beta-delta elimination to generate a single-strand break at the site of the removed base with both 3'- and 5'-phosphates.</text>
</comment>
<comment type="catalytic activity">
    <reaction evidence="2">
        <text>Hydrolysis of DNA containing ring-opened 7-methylguanine residues, releasing 2,6-diamino-4-hydroxy-5-(N-methyl)formamidopyrimidine.</text>
        <dbReference type="EC" id="3.2.2.23"/>
    </reaction>
</comment>
<comment type="catalytic activity">
    <reaction evidence="2">
        <text>2'-deoxyribonucleotide-(2'-deoxyribose 5'-phosphate)-2'-deoxyribonucleotide-DNA = a 3'-end 2'-deoxyribonucleotide-(2,3-dehydro-2,3-deoxyribose 5'-phosphate)-DNA + a 5'-end 5'-phospho-2'-deoxyribonucleoside-DNA + H(+)</text>
        <dbReference type="Rhea" id="RHEA:66592"/>
        <dbReference type="Rhea" id="RHEA-COMP:13180"/>
        <dbReference type="Rhea" id="RHEA-COMP:16897"/>
        <dbReference type="Rhea" id="RHEA-COMP:17067"/>
        <dbReference type="ChEBI" id="CHEBI:15378"/>
        <dbReference type="ChEBI" id="CHEBI:136412"/>
        <dbReference type="ChEBI" id="CHEBI:157695"/>
        <dbReference type="ChEBI" id="CHEBI:167181"/>
        <dbReference type="EC" id="4.2.99.18"/>
    </reaction>
</comment>
<comment type="cofactor">
    <cofactor evidence="2">
        <name>Zn(2+)</name>
        <dbReference type="ChEBI" id="CHEBI:29105"/>
    </cofactor>
    <text evidence="2">Binds 1 zinc ion per subunit.</text>
</comment>
<comment type="subunit">
    <text evidence="2">Monomer.</text>
</comment>
<comment type="similarity">
    <text evidence="2">Belongs to the FPG family.</text>
</comment>
<feature type="initiator methionine" description="Removed" evidence="1">
    <location>
        <position position="1"/>
    </location>
</feature>
<feature type="chain" id="PRO_1000075708" description="Formamidopyrimidine-DNA glycosylase">
    <location>
        <begin position="2"/>
        <end position="287"/>
    </location>
</feature>
<feature type="zinc finger region" description="FPG-type" evidence="2">
    <location>
        <begin position="243"/>
        <end position="277"/>
    </location>
</feature>
<feature type="active site" description="Schiff-base intermediate with DNA" evidence="2">
    <location>
        <position position="2"/>
    </location>
</feature>
<feature type="active site" description="Proton donor" evidence="2">
    <location>
        <position position="3"/>
    </location>
</feature>
<feature type="active site" description="Proton donor; for beta-elimination activity" evidence="2">
    <location>
        <position position="61"/>
    </location>
</feature>
<feature type="active site" description="Proton donor; for delta-elimination activity" evidence="2">
    <location>
        <position position="267"/>
    </location>
</feature>
<feature type="binding site" evidence="2">
    <location>
        <position position="95"/>
    </location>
    <ligand>
        <name>DNA</name>
        <dbReference type="ChEBI" id="CHEBI:16991"/>
    </ligand>
</feature>
<feature type="binding site" evidence="2">
    <location>
        <position position="115"/>
    </location>
    <ligand>
        <name>DNA</name>
        <dbReference type="ChEBI" id="CHEBI:16991"/>
    </ligand>
</feature>
<feature type="binding site" evidence="2">
    <location>
        <position position="157"/>
    </location>
    <ligand>
        <name>DNA</name>
        <dbReference type="ChEBI" id="CHEBI:16991"/>
    </ligand>
</feature>
<accession>A8M661</accession>
<name>FPG_SALAI</name>
<evidence type="ECO:0000250" key="1"/>
<evidence type="ECO:0000255" key="2">
    <source>
        <dbReference type="HAMAP-Rule" id="MF_00103"/>
    </source>
</evidence>
<protein>
    <recommendedName>
        <fullName evidence="2">Formamidopyrimidine-DNA glycosylase</fullName>
        <shortName evidence="2">Fapy-DNA glycosylase</shortName>
        <ecNumber evidence="2">3.2.2.23</ecNumber>
    </recommendedName>
    <alternativeName>
        <fullName evidence="2">DNA-(apurinic or apyrimidinic site) lyase MutM</fullName>
        <shortName evidence="2">AP lyase MutM</shortName>
        <ecNumber evidence="2">4.2.99.18</ecNumber>
    </alternativeName>
</protein>
<reference key="1">
    <citation type="submission" date="2007-10" db="EMBL/GenBank/DDBJ databases">
        <title>Complete sequence of Salinispora arenicola CNS-205.</title>
        <authorList>
            <consortium name="US DOE Joint Genome Institute"/>
            <person name="Copeland A."/>
            <person name="Lucas S."/>
            <person name="Lapidus A."/>
            <person name="Barry K."/>
            <person name="Glavina del Rio T."/>
            <person name="Dalin E."/>
            <person name="Tice H."/>
            <person name="Pitluck S."/>
            <person name="Foster B."/>
            <person name="Schmutz J."/>
            <person name="Larimer F."/>
            <person name="Land M."/>
            <person name="Hauser L."/>
            <person name="Kyrpides N."/>
            <person name="Ivanova N."/>
            <person name="Jensen P.R."/>
            <person name="Moore B.S."/>
            <person name="Penn K."/>
            <person name="Jenkins C."/>
            <person name="Udwary D."/>
            <person name="Xiang L."/>
            <person name="Gontang E."/>
            <person name="Richardson P."/>
        </authorList>
    </citation>
    <scope>NUCLEOTIDE SEQUENCE [LARGE SCALE GENOMIC DNA]</scope>
    <source>
        <strain>CNS-205</strain>
    </source>
</reference>